<protein>
    <recommendedName>
        <fullName evidence="1">Ribosomal RNA large subunit methyltransferase E</fullName>
        <ecNumber evidence="1">2.1.1.166</ecNumber>
    </recommendedName>
    <alternativeName>
        <fullName evidence="1">23S rRNA Um2552 methyltransferase</fullName>
    </alternativeName>
    <alternativeName>
        <fullName evidence="1">rRNA (uridine-2'-O-)-methyltransferase</fullName>
    </alternativeName>
</protein>
<reference key="1">
    <citation type="journal article" date="2008" name="J. Biotechnol.">
        <title>The genome of Xanthomonas campestris pv. campestris B100 and its use for the reconstruction of metabolic pathways involved in xanthan biosynthesis.</title>
        <authorList>
            <person name="Vorhoelter F.-J."/>
            <person name="Schneiker S."/>
            <person name="Goesmann A."/>
            <person name="Krause L."/>
            <person name="Bekel T."/>
            <person name="Kaiser O."/>
            <person name="Linke B."/>
            <person name="Patschkowski T."/>
            <person name="Rueckert C."/>
            <person name="Schmid J."/>
            <person name="Sidhu V.K."/>
            <person name="Sieber V."/>
            <person name="Tauch A."/>
            <person name="Watt S.A."/>
            <person name="Weisshaar B."/>
            <person name="Becker A."/>
            <person name="Niehaus K."/>
            <person name="Puehler A."/>
        </authorList>
    </citation>
    <scope>NUCLEOTIDE SEQUENCE [LARGE SCALE GENOMIC DNA]</scope>
    <source>
        <strain>B100</strain>
    </source>
</reference>
<gene>
    <name evidence="1" type="primary">rlmE</name>
    <name evidence="1" type="synonym">ftsJ</name>
    <name evidence="1" type="synonym">rrmJ</name>
    <name type="ordered locus">xcc-b100_2547</name>
</gene>
<proteinExistence type="inferred from homology"/>
<sequence>MPSRSKSSQRWLKEHFADPFVKKAQAEGMRSRAAYKLEELLQRDRLLKPGMVVVDLGAAPGGWSQQVRKSMGASGRVVALDILEMPPLAGVEFLHGDFREQAVLSEFEAMLGDVPVDLVLSDMAPNKSGMDAVDQPRMMHLAELAMEFADTHLKVGGAFLIKLFQGVGSDDYIRELRRRYEKVTIRKPAASRKRSAEVYVLGQGKRAQIK</sequence>
<accession>B0RTZ3</accession>
<name>RLME_XANCB</name>
<organism>
    <name type="scientific">Xanthomonas campestris pv. campestris (strain B100)</name>
    <dbReference type="NCBI Taxonomy" id="509169"/>
    <lineage>
        <taxon>Bacteria</taxon>
        <taxon>Pseudomonadati</taxon>
        <taxon>Pseudomonadota</taxon>
        <taxon>Gammaproteobacteria</taxon>
        <taxon>Lysobacterales</taxon>
        <taxon>Lysobacteraceae</taxon>
        <taxon>Xanthomonas</taxon>
    </lineage>
</organism>
<feature type="chain" id="PRO_1000195028" description="Ribosomal RNA large subunit methyltransferase E">
    <location>
        <begin position="1"/>
        <end position="210"/>
    </location>
</feature>
<feature type="active site" description="Proton acceptor" evidence="1">
    <location>
        <position position="162"/>
    </location>
</feature>
<feature type="binding site" evidence="1">
    <location>
        <position position="61"/>
    </location>
    <ligand>
        <name>S-adenosyl-L-methionine</name>
        <dbReference type="ChEBI" id="CHEBI:59789"/>
    </ligand>
</feature>
<feature type="binding site" evidence="1">
    <location>
        <position position="63"/>
    </location>
    <ligand>
        <name>S-adenosyl-L-methionine</name>
        <dbReference type="ChEBI" id="CHEBI:59789"/>
    </ligand>
</feature>
<feature type="binding site" evidence="1">
    <location>
        <position position="81"/>
    </location>
    <ligand>
        <name>S-adenosyl-L-methionine</name>
        <dbReference type="ChEBI" id="CHEBI:59789"/>
    </ligand>
</feature>
<feature type="binding site" evidence="1">
    <location>
        <position position="97"/>
    </location>
    <ligand>
        <name>S-adenosyl-L-methionine</name>
        <dbReference type="ChEBI" id="CHEBI:59789"/>
    </ligand>
</feature>
<feature type="binding site" evidence="1">
    <location>
        <position position="122"/>
    </location>
    <ligand>
        <name>S-adenosyl-L-methionine</name>
        <dbReference type="ChEBI" id="CHEBI:59789"/>
    </ligand>
</feature>
<keyword id="KW-0963">Cytoplasm</keyword>
<keyword id="KW-0489">Methyltransferase</keyword>
<keyword id="KW-0698">rRNA processing</keyword>
<keyword id="KW-0949">S-adenosyl-L-methionine</keyword>
<keyword id="KW-0808">Transferase</keyword>
<comment type="function">
    <text evidence="1">Specifically methylates the uridine in position 2552 of 23S rRNA at the 2'-O position of the ribose in the fully assembled 50S ribosomal subunit.</text>
</comment>
<comment type="catalytic activity">
    <reaction evidence="1">
        <text>uridine(2552) in 23S rRNA + S-adenosyl-L-methionine = 2'-O-methyluridine(2552) in 23S rRNA + S-adenosyl-L-homocysteine + H(+)</text>
        <dbReference type="Rhea" id="RHEA:42720"/>
        <dbReference type="Rhea" id="RHEA-COMP:10202"/>
        <dbReference type="Rhea" id="RHEA-COMP:10203"/>
        <dbReference type="ChEBI" id="CHEBI:15378"/>
        <dbReference type="ChEBI" id="CHEBI:57856"/>
        <dbReference type="ChEBI" id="CHEBI:59789"/>
        <dbReference type="ChEBI" id="CHEBI:65315"/>
        <dbReference type="ChEBI" id="CHEBI:74478"/>
        <dbReference type="EC" id="2.1.1.166"/>
    </reaction>
</comment>
<comment type="subcellular location">
    <subcellularLocation>
        <location evidence="1">Cytoplasm</location>
    </subcellularLocation>
</comment>
<comment type="similarity">
    <text evidence="1">Belongs to the class I-like SAM-binding methyltransferase superfamily. RNA methyltransferase RlmE family.</text>
</comment>
<dbReference type="EC" id="2.1.1.166" evidence="1"/>
<dbReference type="EMBL" id="AM920689">
    <property type="protein sequence ID" value="CAP51907.1"/>
    <property type="molecule type" value="Genomic_DNA"/>
</dbReference>
<dbReference type="SMR" id="B0RTZ3"/>
<dbReference type="KEGG" id="xca:xcc-b100_2547"/>
<dbReference type="HOGENOM" id="CLU_009422_4_0_6"/>
<dbReference type="Proteomes" id="UP000001188">
    <property type="component" value="Chromosome"/>
</dbReference>
<dbReference type="GO" id="GO:0005737">
    <property type="term" value="C:cytoplasm"/>
    <property type="evidence" value="ECO:0007669"/>
    <property type="project" value="UniProtKB-SubCell"/>
</dbReference>
<dbReference type="GO" id="GO:0008650">
    <property type="term" value="F:rRNA (uridine-2'-O-)-methyltransferase activity"/>
    <property type="evidence" value="ECO:0007669"/>
    <property type="project" value="UniProtKB-UniRule"/>
</dbReference>
<dbReference type="FunFam" id="3.40.50.150:FF:000005">
    <property type="entry name" value="Ribosomal RNA large subunit methyltransferase E"/>
    <property type="match status" value="1"/>
</dbReference>
<dbReference type="Gene3D" id="3.40.50.150">
    <property type="entry name" value="Vaccinia Virus protein VP39"/>
    <property type="match status" value="1"/>
</dbReference>
<dbReference type="HAMAP" id="MF_01547">
    <property type="entry name" value="RNA_methyltr_E"/>
    <property type="match status" value="1"/>
</dbReference>
<dbReference type="InterPro" id="IPR050082">
    <property type="entry name" value="RNA_methyltr_RlmE"/>
</dbReference>
<dbReference type="InterPro" id="IPR002877">
    <property type="entry name" value="RNA_MeTrfase_FtsJ_dom"/>
</dbReference>
<dbReference type="InterPro" id="IPR015507">
    <property type="entry name" value="rRNA-MeTfrase_E"/>
</dbReference>
<dbReference type="InterPro" id="IPR029063">
    <property type="entry name" value="SAM-dependent_MTases_sf"/>
</dbReference>
<dbReference type="NCBIfam" id="NF008390">
    <property type="entry name" value="PRK11188.1"/>
    <property type="match status" value="1"/>
</dbReference>
<dbReference type="PANTHER" id="PTHR10920">
    <property type="entry name" value="RIBOSOMAL RNA METHYLTRANSFERASE"/>
    <property type="match status" value="1"/>
</dbReference>
<dbReference type="PANTHER" id="PTHR10920:SF18">
    <property type="entry name" value="RRNA METHYLTRANSFERASE 2, MITOCHONDRIAL"/>
    <property type="match status" value="1"/>
</dbReference>
<dbReference type="Pfam" id="PF01728">
    <property type="entry name" value="FtsJ"/>
    <property type="match status" value="1"/>
</dbReference>
<dbReference type="PIRSF" id="PIRSF005461">
    <property type="entry name" value="23S_rRNA_mtase"/>
    <property type="match status" value="1"/>
</dbReference>
<dbReference type="SUPFAM" id="SSF53335">
    <property type="entry name" value="S-adenosyl-L-methionine-dependent methyltransferases"/>
    <property type="match status" value="1"/>
</dbReference>
<evidence type="ECO:0000255" key="1">
    <source>
        <dbReference type="HAMAP-Rule" id="MF_01547"/>
    </source>
</evidence>